<sequence length="111" mass="12340">MADKAILWALISASTKEGRKACSLSYFACKAAEAELGLAYMAANDNKEFLTSLSNIMRYKIDAGLSESYTCYLLSKGKIIRPYLKNLNPLQLAADCIETVNKIKDKNKKNH</sequence>
<name>YIBV_ECO57</name>
<reference key="1">
    <citation type="journal article" date="2001" name="Nature">
        <title>Genome sequence of enterohaemorrhagic Escherichia coli O157:H7.</title>
        <authorList>
            <person name="Perna N.T."/>
            <person name="Plunkett G. III"/>
            <person name="Burland V."/>
            <person name="Mau B."/>
            <person name="Glasner J.D."/>
            <person name="Rose D.J."/>
            <person name="Mayhew G.F."/>
            <person name="Evans P.S."/>
            <person name="Gregor J."/>
            <person name="Kirkpatrick H.A."/>
            <person name="Posfai G."/>
            <person name="Hackett J."/>
            <person name="Klink S."/>
            <person name="Boutin A."/>
            <person name="Shao Y."/>
            <person name="Miller L."/>
            <person name="Grotbeck E.J."/>
            <person name="Davis N.W."/>
            <person name="Lim A."/>
            <person name="Dimalanta E.T."/>
            <person name="Potamousis K."/>
            <person name="Apodaca J."/>
            <person name="Anantharaman T.S."/>
            <person name="Lin J."/>
            <person name="Yen G."/>
            <person name="Schwartz D.C."/>
            <person name="Welch R.A."/>
            <person name="Blattner F.R."/>
        </authorList>
    </citation>
    <scope>NUCLEOTIDE SEQUENCE [LARGE SCALE GENOMIC DNA]</scope>
    <source>
        <strain>O157:H7 / EDL933 / ATCC 700927 / EHEC</strain>
    </source>
</reference>
<reference key="2">
    <citation type="journal article" date="2001" name="DNA Res.">
        <title>Complete genome sequence of enterohemorrhagic Escherichia coli O157:H7 and genomic comparison with a laboratory strain K-12.</title>
        <authorList>
            <person name="Hayashi T."/>
            <person name="Makino K."/>
            <person name="Ohnishi M."/>
            <person name="Kurokawa K."/>
            <person name="Ishii K."/>
            <person name="Yokoyama K."/>
            <person name="Han C.-G."/>
            <person name="Ohtsubo E."/>
            <person name="Nakayama K."/>
            <person name="Murata T."/>
            <person name="Tanaka M."/>
            <person name="Tobe T."/>
            <person name="Iida T."/>
            <person name="Takami H."/>
            <person name="Honda T."/>
            <person name="Sasakawa C."/>
            <person name="Ogasawara N."/>
            <person name="Yasunaga T."/>
            <person name="Kuhara S."/>
            <person name="Shiba T."/>
            <person name="Hattori M."/>
            <person name="Shinagawa H."/>
        </authorList>
    </citation>
    <scope>NUCLEOTIDE SEQUENCE [LARGE SCALE GENOMIC DNA]</scope>
    <source>
        <strain>O157:H7 / Sakai / RIMD 0509952 / EHEC</strain>
    </source>
</reference>
<organism>
    <name type="scientific">Escherichia coli O157:H7</name>
    <dbReference type="NCBI Taxonomy" id="83334"/>
    <lineage>
        <taxon>Bacteria</taxon>
        <taxon>Pseudomonadati</taxon>
        <taxon>Pseudomonadota</taxon>
        <taxon>Gammaproteobacteria</taxon>
        <taxon>Enterobacterales</taxon>
        <taxon>Enterobacteriaceae</taxon>
        <taxon>Escherichia</taxon>
    </lineage>
</organism>
<gene>
    <name type="primary">yibV</name>
    <name type="ordered locus">Z5018.1</name>
    <name type="ordered locus">ECs4472</name>
</gene>
<dbReference type="EMBL" id="AE005174">
    <property type="status" value="NOT_ANNOTATED_CDS"/>
    <property type="molecule type" value="Genomic_DNA"/>
</dbReference>
<dbReference type="EMBL" id="BA000007">
    <property type="protein sequence ID" value="BAB37895.1"/>
    <property type="molecule type" value="Genomic_DNA"/>
</dbReference>
<dbReference type="PIR" id="H91187">
    <property type="entry name" value="H91187"/>
</dbReference>
<dbReference type="RefSeq" id="NP_312499.1">
    <property type="nucleotide sequence ID" value="NC_002695.1"/>
</dbReference>
<dbReference type="SMR" id="Q8X2T9"/>
<dbReference type="HOGENOM" id="CLU_140911_1_0_6"/>
<dbReference type="OMA" id="VCNDEDW"/>
<dbReference type="Proteomes" id="UP000000558">
    <property type="component" value="Chromosome"/>
</dbReference>
<dbReference type="Proteomes" id="UP000002519">
    <property type="component" value="Chromosome"/>
</dbReference>
<dbReference type="InterPro" id="IPR028955">
    <property type="entry name" value="Imm57"/>
</dbReference>
<dbReference type="Pfam" id="PF15596">
    <property type="entry name" value="Imm57"/>
    <property type="match status" value="1"/>
</dbReference>
<accession>Q8X2T9</accession>
<feature type="chain" id="PRO_0000311862" description="Protein YibV">
    <location>
        <begin position="1"/>
        <end position="111"/>
    </location>
</feature>
<keyword id="KW-1185">Reference proteome</keyword>
<proteinExistence type="predicted"/>
<protein>
    <recommendedName>
        <fullName>Protein YibV</fullName>
    </recommendedName>
</protein>